<feature type="chain" id="PRO_1000001348" description="LexA repressor">
    <location>
        <begin position="1"/>
        <end position="238"/>
    </location>
</feature>
<feature type="DNA-binding region" description="H-T-H motif" evidence="1">
    <location>
        <begin position="26"/>
        <end position="46"/>
    </location>
</feature>
<feature type="active site" description="For autocatalytic cleavage activity" evidence="1">
    <location>
        <position position="158"/>
    </location>
</feature>
<feature type="active site" description="For autocatalytic cleavage activity" evidence="1">
    <location>
        <position position="196"/>
    </location>
</feature>
<feature type="site" description="Cleavage; by autolysis" evidence="1">
    <location>
        <begin position="123"/>
        <end position="124"/>
    </location>
</feature>
<comment type="function">
    <text evidence="1">Represses a number of genes involved in the response to DNA damage (SOS response), including recA and lexA. In the presence of single-stranded DNA, RecA interacts with LexA causing an autocatalytic cleavage which disrupts the DNA-binding part of LexA, leading to derepression of the SOS regulon and eventually DNA repair.</text>
</comment>
<comment type="catalytic activity">
    <reaction evidence="1">
        <text>Hydrolysis of Ala-|-Gly bond in repressor LexA.</text>
        <dbReference type="EC" id="3.4.21.88"/>
    </reaction>
</comment>
<comment type="subunit">
    <text evidence="1">Homodimer.</text>
</comment>
<comment type="similarity">
    <text evidence="1">Belongs to the peptidase S24 family.</text>
</comment>
<name>LEXA_SINMW</name>
<reference key="1">
    <citation type="submission" date="2007-06" db="EMBL/GenBank/DDBJ databases">
        <title>Complete sequence of Sinorhizobium medicae WSM419 chromosome.</title>
        <authorList>
            <consortium name="US DOE Joint Genome Institute"/>
            <person name="Copeland A."/>
            <person name="Lucas S."/>
            <person name="Lapidus A."/>
            <person name="Barry K."/>
            <person name="Glavina del Rio T."/>
            <person name="Dalin E."/>
            <person name="Tice H."/>
            <person name="Pitluck S."/>
            <person name="Chain P."/>
            <person name="Malfatti S."/>
            <person name="Shin M."/>
            <person name="Vergez L."/>
            <person name="Schmutz J."/>
            <person name="Larimer F."/>
            <person name="Land M."/>
            <person name="Hauser L."/>
            <person name="Kyrpides N."/>
            <person name="Mikhailova N."/>
            <person name="Reeve W.G."/>
            <person name="Richardson P."/>
        </authorList>
    </citation>
    <scope>NUCLEOTIDE SEQUENCE [LARGE SCALE GENOMIC DNA]</scope>
    <source>
        <strain>WSM419</strain>
    </source>
</reference>
<dbReference type="EC" id="3.4.21.88" evidence="1"/>
<dbReference type="EMBL" id="CP000738">
    <property type="protein sequence ID" value="ABR60201.1"/>
    <property type="molecule type" value="Genomic_DNA"/>
</dbReference>
<dbReference type="RefSeq" id="WP_011975511.1">
    <property type="nucleotide sequence ID" value="NC_009636.1"/>
</dbReference>
<dbReference type="RefSeq" id="YP_001327036.1">
    <property type="nucleotide sequence ID" value="NC_009636.1"/>
</dbReference>
<dbReference type="SMR" id="A6U971"/>
<dbReference type="STRING" id="366394.Smed_1353"/>
<dbReference type="MEROPS" id="S24.001"/>
<dbReference type="GeneID" id="61614250"/>
<dbReference type="KEGG" id="smd:Smed_1353"/>
<dbReference type="PATRIC" id="fig|366394.8.peg.4480"/>
<dbReference type="eggNOG" id="COG1974">
    <property type="taxonomic scope" value="Bacteria"/>
</dbReference>
<dbReference type="HOGENOM" id="CLU_066192_45_2_5"/>
<dbReference type="OrthoDB" id="9802364at2"/>
<dbReference type="Proteomes" id="UP000001108">
    <property type="component" value="Chromosome"/>
</dbReference>
<dbReference type="GO" id="GO:0003677">
    <property type="term" value="F:DNA binding"/>
    <property type="evidence" value="ECO:0007669"/>
    <property type="project" value="UniProtKB-UniRule"/>
</dbReference>
<dbReference type="GO" id="GO:0004252">
    <property type="term" value="F:serine-type endopeptidase activity"/>
    <property type="evidence" value="ECO:0007669"/>
    <property type="project" value="UniProtKB-UniRule"/>
</dbReference>
<dbReference type="GO" id="GO:0006281">
    <property type="term" value="P:DNA repair"/>
    <property type="evidence" value="ECO:0007669"/>
    <property type="project" value="UniProtKB-UniRule"/>
</dbReference>
<dbReference type="GO" id="GO:0006260">
    <property type="term" value="P:DNA replication"/>
    <property type="evidence" value="ECO:0007669"/>
    <property type="project" value="UniProtKB-UniRule"/>
</dbReference>
<dbReference type="GO" id="GO:0045892">
    <property type="term" value="P:negative regulation of DNA-templated transcription"/>
    <property type="evidence" value="ECO:0007669"/>
    <property type="project" value="UniProtKB-UniRule"/>
</dbReference>
<dbReference type="GO" id="GO:0006508">
    <property type="term" value="P:proteolysis"/>
    <property type="evidence" value="ECO:0007669"/>
    <property type="project" value="InterPro"/>
</dbReference>
<dbReference type="GO" id="GO:0009432">
    <property type="term" value="P:SOS response"/>
    <property type="evidence" value="ECO:0007669"/>
    <property type="project" value="UniProtKB-UniRule"/>
</dbReference>
<dbReference type="CDD" id="cd06529">
    <property type="entry name" value="S24_LexA-like"/>
    <property type="match status" value="1"/>
</dbReference>
<dbReference type="FunFam" id="1.10.10.10:FF:000102">
    <property type="entry name" value="LexA repressor"/>
    <property type="match status" value="1"/>
</dbReference>
<dbReference type="FunFam" id="2.10.109.10:FF:000001">
    <property type="entry name" value="LexA repressor"/>
    <property type="match status" value="1"/>
</dbReference>
<dbReference type="Gene3D" id="2.10.109.10">
    <property type="entry name" value="Umud Fragment, subunit A"/>
    <property type="match status" value="1"/>
</dbReference>
<dbReference type="Gene3D" id="1.10.10.10">
    <property type="entry name" value="Winged helix-like DNA-binding domain superfamily/Winged helix DNA-binding domain"/>
    <property type="match status" value="1"/>
</dbReference>
<dbReference type="HAMAP" id="MF_00015">
    <property type="entry name" value="LexA"/>
    <property type="match status" value="1"/>
</dbReference>
<dbReference type="InterPro" id="IPR006200">
    <property type="entry name" value="LexA"/>
</dbReference>
<dbReference type="InterPro" id="IPR039418">
    <property type="entry name" value="LexA-like"/>
</dbReference>
<dbReference type="InterPro" id="IPR036286">
    <property type="entry name" value="LexA/Signal_pep-like_sf"/>
</dbReference>
<dbReference type="InterPro" id="IPR006199">
    <property type="entry name" value="LexA_DNA-bd_dom"/>
</dbReference>
<dbReference type="InterPro" id="IPR050077">
    <property type="entry name" value="LexA_repressor"/>
</dbReference>
<dbReference type="InterPro" id="IPR006197">
    <property type="entry name" value="Peptidase_S24_LexA"/>
</dbReference>
<dbReference type="InterPro" id="IPR015927">
    <property type="entry name" value="Peptidase_S24_S26A/B/C"/>
</dbReference>
<dbReference type="InterPro" id="IPR036388">
    <property type="entry name" value="WH-like_DNA-bd_sf"/>
</dbReference>
<dbReference type="InterPro" id="IPR036390">
    <property type="entry name" value="WH_DNA-bd_sf"/>
</dbReference>
<dbReference type="NCBIfam" id="TIGR00498">
    <property type="entry name" value="lexA"/>
    <property type="match status" value="1"/>
</dbReference>
<dbReference type="PANTHER" id="PTHR33516">
    <property type="entry name" value="LEXA REPRESSOR"/>
    <property type="match status" value="1"/>
</dbReference>
<dbReference type="PANTHER" id="PTHR33516:SF2">
    <property type="entry name" value="LEXA REPRESSOR-RELATED"/>
    <property type="match status" value="1"/>
</dbReference>
<dbReference type="Pfam" id="PF01726">
    <property type="entry name" value="LexA_DNA_bind"/>
    <property type="match status" value="1"/>
</dbReference>
<dbReference type="Pfam" id="PF00717">
    <property type="entry name" value="Peptidase_S24"/>
    <property type="match status" value="1"/>
</dbReference>
<dbReference type="PRINTS" id="PR00726">
    <property type="entry name" value="LEXASERPTASE"/>
</dbReference>
<dbReference type="SUPFAM" id="SSF51306">
    <property type="entry name" value="LexA/Signal peptidase"/>
    <property type="match status" value="1"/>
</dbReference>
<dbReference type="SUPFAM" id="SSF46785">
    <property type="entry name" value="Winged helix' DNA-binding domain"/>
    <property type="match status" value="1"/>
</dbReference>
<evidence type="ECO:0000255" key="1">
    <source>
        <dbReference type="HAMAP-Rule" id="MF_00015"/>
    </source>
</evidence>
<sequence length="238" mass="25781">MLTRKQQELLLFIHERMKESGVPPSFDEMKDALDLASKSGIHRLITALEERGFIRRLPNRARALEVIKLPEAYAGNPQVRRGFSPSVIEGSLGKPAAPAPAPKPAPPAENASVVVPVMGRIAAGVPISAIQNNMHDISVPIEMIGSGEHYALEIKGDSMIEAGILDGDTVIIRNASTASIGDIVVALIDDEEATLKRFRRKGASIALEAANPAYETRIFGPDRVKIQGKLVGLIRRYH</sequence>
<organism>
    <name type="scientific">Sinorhizobium medicae (strain WSM419)</name>
    <name type="common">Ensifer medicae</name>
    <dbReference type="NCBI Taxonomy" id="366394"/>
    <lineage>
        <taxon>Bacteria</taxon>
        <taxon>Pseudomonadati</taxon>
        <taxon>Pseudomonadota</taxon>
        <taxon>Alphaproteobacteria</taxon>
        <taxon>Hyphomicrobiales</taxon>
        <taxon>Rhizobiaceae</taxon>
        <taxon>Sinorhizobium/Ensifer group</taxon>
        <taxon>Sinorhizobium</taxon>
    </lineage>
</organism>
<gene>
    <name evidence="1" type="primary">lexA</name>
    <name type="ordered locus">Smed_1353</name>
</gene>
<keyword id="KW-0068">Autocatalytic cleavage</keyword>
<keyword id="KW-0227">DNA damage</keyword>
<keyword id="KW-0234">DNA repair</keyword>
<keyword id="KW-0235">DNA replication</keyword>
<keyword id="KW-0238">DNA-binding</keyword>
<keyword id="KW-0378">Hydrolase</keyword>
<keyword id="KW-0678">Repressor</keyword>
<keyword id="KW-0742">SOS response</keyword>
<keyword id="KW-0804">Transcription</keyword>
<keyword id="KW-0805">Transcription regulation</keyword>
<protein>
    <recommendedName>
        <fullName evidence="1">LexA repressor</fullName>
        <ecNumber evidence="1">3.4.21.88</ecNumber>
    </recommendedName>
</protein>
<accession>A6U971</accession>
<proteinExistence type="inferred from homology"/>